<protein>
    <recommendedName>
        <fullName evidence="5">Charged multivesicular body protein 1B2</fullName>
    </recommendedName>
    <alternativeName>
        <fullName>Chromatin-modifying protein 1b-2</fullName>
        <shortName>CHMP1b-2</shortName>
    </alternativeName>
</protein>
<proteinExistence type="evidence at transcript level"/>
<sequence>MSNMEKHLFNLKFAAKELNRNAKKCDKEEKAEKAKIKKAIQKGNTEVARIHAENAIRQKNQAINFLRMSARVDAVAARVQTAVTMGKVTKSMAGVVKSMDATLRSMNLEKISALMDKFEHQFETLDVQTQQMEDTMSSTTTLTTPQNQVDMLLQEMADEAGLDLNMELPQGQTGSVGASVASTEQDELSQRLARLRDQV</sequence>
<evidence type="ECO:0000250" key="1"/>
<evidence type="ECO:0000255" key="2"/>
<evidence type="ECO:0000256" key="3">
    <source>
        <dbReference type="SAM" id="MobiDB-lite"/>
    </source>
</evidence>
<evidence type="ECO:0000305" key="4"/>
<evidence type="ECO:0000312" key="5">
    <source>
        <dbReference type="MGI" id="MGI:1914278"/>
    </source>
</evidence>
<accession>Q9CQD4</accession>
<accession>B1ATX3</accession>
<dbReference type="EMBL" id="AK011297">
    <property type="protein sequence ID" value="BAB27525.2"/>
    <property type="molecule type" value="mRNA"/>
</dbReference>
<dbReference type="EMBL" id="AK019383">
    <property type="protein sequence ID" value="BAB31692.2"/>
    <property type="molecule type" value="mRNA"/>
</dbReference>
<dbReference type="EMBL" id="AL669851">
    <property type="status" value="NOT_ANNOTATED_CDS"/>
    <property type="molecule type" value="Genomic_DNA"/>
</dbReference>
<dbReference type="EMBL" id="AL844897">
    <property type="status" value="NOT_ANNOTATED_CDS"/>
    <property type="molecule type" value="Genomic_DNA"/>
</dbReference>
<dbReference type="EMBL" id="BC016070">
    <property type="protein sequence ID" value="AAH16070.2"/>
    <property type="molecule type" value="mRNA"/>
</dbReference>
<dbReference type="CCDS" id="CCDS53171.1"/>
<dbReference type="RefSeq" id="NP_080197.2">
    <property type="nucleotide sequence ID" value="NM_025921.3"/>
</dbReference>
<dbReference type="SMR" id="Q9CQD4"/>
<dbReference type="BioGRID" id="211886">
    <property type="interactions" value="7"/>
</dbReference>
<dbReference type="ComplexPortal" id="CPX-333">
    <property type="entry name" value="ESCRT-III complex, variant Chmp1b2"/>
</dbReference>
<dbReference type="FunCoup" id="Q9CQD4">
    <property type="interactions" value="503"/>
</dbReference>
<dbReference type="IntAct" id="Q9CQD4">
    <property type="interactions" value="1"/>
</dbReference>
<dbReference type="MINT" id="Q9CQD4"/>
<dbReference type="STRING" id="10090.ENSMUSP00000113588"/>
<dbReference type="iPTMnet" id="Q9CQD4"/>
<dbReference type="PhosphoSitePlus" id="Q9CQD4"/>
<dbReference type="jPOST" id="Q9CQD4"/>
<dbReference type="PaxDb" id="10090-ENSMUSP00000113588"/>
<dbReference type="PeptideAtlas" id="Q9CQD4"/>
<dbReference type="ProteomicsDB" id="281461"/>
<dbReference type="Pumba" id="Q9CQD4"/>
<dbReference type="DNASU" id="67028"/>
<dbReference type="Ensembl" id="ENSMUST00000120722.2">
    <property type="protein sequence ID" value="ENSMUSP00000113588.2"/>
    <property type="gene ID" value="ENSMUSG00000031242.8"/>
</dbReference>
<dbReference type="GeneID" id="67028"/>
<dbReference type="KEGG" id="mmu:67028"/>
<dbReference type="UCSC" id="uc009ucj.2">
    <property type="organism name" value="mouse"/>
</dbReference>
<dbReference type="AGR" id="MGI:1914278"/>
<dbReference type="CTD" id="67028"/>
<dbReference type="MGI" id="MGI:1914278">
    <property type="gene designation" value="Chmp1b2"/>
</dbReference>
<dbReference type="VEuPathDB" id="HostDB:ENSMUSG00000031242"/>
<dbReference type="eggNOG" id="KOG3232">
    <property type="taxonomic scope" value="Eukaryota"/>
</dbReference>
<dbReference type="GeneTree" id="ENSGT00950000182832"/>
<dbReference type="HOGENOM" id="CLU_080826_0_1_1"/>
<dbReference type="InParanoid" id="Q9CQD4"/>
<dbReference type="OMA" id="MMIPLIQ"/>
<dbReference type="OrthoDB" id="10266568at2759"/>
<dbReference type="PhylomeDB" id="Q9CQD4"/>
<dbReference type="TreeFam" id="TF300076"/>
<dbReference type="BioGRID-ORCS" id="67028">
    <property type="hits" value="0 hits in 79 CRISPR screens"/>
</dbReference>
<dbReference type="ChiTaRS" id="2610002M06Rik">
    <property type="organism name" value="mouse"/>
</dbReference>
<dbReference type="PRO" id="PR:Q9CQD4"/>
<dbReference type="Proteomes" id="UP000000589">
    <property type="component" value="Chromosome X"/>
</dbReference>
<dbReference type="RNAct" id="Q9CQD4">
    <property type="molecule type" value="protein"/>
</dbReference>
<dbReference type="Bgee" id="ENSMUSG00000031242">
    <property type="expression patterns" value="Expressed in dorsal tegmental nucleus and 240 other cell types or tissues"/>
</dbReference>
<dbReference type="GO" id="GO:1904930">
    <property type="term" value="C:amphisome membrane"/>
    <property type="evidence" value="ECO:0000266"/>
    <property type="project" value="ComplexPortal"/>
</dbReference>
<dbReference type="GO" id="GO:0000421">
    <property type="term" value="C:autophagosome membrane"/>
    <property type="evidence" value="ECO:0000266"/>
    <property type="project" value="ComplexPortal"/>
</dbReference>
<dbReference type="GO" id="GO:0005829">
    <property type="term" value="C:cytosol"/>
    <property type="evidence" value="ECO:0007669"/>
    <property type="project" value="UniProtKB-SubCell"/>
</dbReference>
<dbReference type="GO" id="GO:0000776">
    <property type="term" value="C:kinetochore"/>
    <property type="evidence" value="ECO:0000266"/>
    <property type="project" value="ComplexPortal"/>
</dbReference>
<dbReference type="GO" id="GO:0005828">
    <property type="term" value="C:kinetochore microtubule"/>
    <property type="evidence" value="ECO:0000266"/>
    <property type="project" value="ComplexPortal"/>
</dbReference>
<dbReference type="GO" id="GO:0005765">
    <property type="term" value="C:lysosomal membrane"/>
    <property type="evidence" value="ECO:0000266"/>
    <property type="project" value="ComplexPortal"/>
</dbReference>
<dbReference type="GO" id="GO:0030496">
    <property type="term" value="C:midbody"/>
    <property type="evidence" value="ECO:0000266"/>
    <property type="project" value="ComplexPortal"/>
</dbReference>
<dbReference type="GO" id="GO:0032585">
    <property type="term" value="C:multivesicular body membrane"/>
    <property type="evidence" value="ECO:0000266"/>
    <property type="project" value="ComplexPortal"/>
</dbReference>
<dbReference type="GO" id="GO:0005643">
    <property type="term" value="C:nuclear pore"/>
    <property type="evidence" value="ECO:0000266"/>
    <property type="project" value="ComplexPortal"/>
</dbReference>
<dbReference type="GO" id="GO:0005886">
    <property type="term" value="C:plasma membrane"/>
    <property type="evidence" value="ECO:0000266"/>
    <property type="project" value="ComplexPortal"/>
</dbReference>
<dbReference type="GO" id="GO:0097352">
    <property type="term" value="P:autophagosome maturation"/>
    <property type="evidence" value="ECO:0000266"/>
    <property type="project" value="ComplexPortal"/>
</dbReference>
<dbReference type="GO" id="GO:0006914">
    <property type="term" value="P:autophagy"/>
    <property type="evidence" value="ECO:0000266"/>
    <property type="project" value="ComplexPortal"/>
</dbReference>
<dbReference type="GO" id="GO:1902774">
    <property type="term" value="P:late endosome to lysosome transport"/>
    <property type="evidence" value="ECO:0000266"/>
    <property type="project" value="ComplexPortal"/>
</dbReference>
<dbReference type="GO" id="GO:0090148">
    <property type="term" value="P:membrane fission"/>
    <property type="evidence" value="ECO:0000303"/>
    <property type="project" value="ComplexPortal"/>
</dbReference>
<dbReference type="GO" id="GO:0061952">
    <property type="term" value="P:midbody abscission"/>
    <property type="evidence" value="ECO:0000266"/>
    <property type="project" value="ComplexPortal"/>
</dbReference>
<dbReference type="GO" id="GO:0007080">
    <property type="term" value="P:mitotic metaphase chromosome alignment"/>
    <property type="evidence" value="ECO:0000266"/>
    <property type="project" value="ComplexPortal"/>
</dbReference>
<dbReference type="GO" id="GO:0036258">
    <property type="term" value="P:multivesicular body assembly"/>
    <property type="evidence" value="ECO:0000303"/>
    <property type="project" value="ComplexPortal"/>
</dbReference>
<dbReference type="GO" id="GO:0071985">
    <property type="term" value="P:multivesicular body sorting pathway"/>
    <property type="evidence" value="ECO:0000266"/>
    <property type="project" value="ComplexPortal"/>
</dbReference>
<dbReference type="GO" id="GO:0061763">
    <property type="term" value="P:multivesicular body-lysosome fusion"/>
    <property type="evidence" value="ECO:0000303"/>
    <property type="project" value="ComplexPortal"/>
</dbReference>
<dbReference type="GO" id="GO:0031468">
    <property type="term" value="P:nuclear membrane reassembly"/>
    <property type="evidence" value="ECO:0000266"/>
    <property type="project" value="ComplexPortal"/>
</dbReference>
<dbReference type="GO" id="GO:0006997">
    <property type="term" value="P:nucleus organization"/>
    <property type="evidence" value="ECO:0000266"/>
    <property type="project" value="ComplexPortal"/>
</dbReference>
<dbReference type="GO" id="GO:0001778">
    <property type="term" value="P:plasma membrane repair"/>
    <property type="evidence" value="ECO:0000266"/>
    <property type="project" value="ComplexPortal"/>
</dbReference>
<dbReference type="GO" id="GO:0015031">
    <property type="term" value="P:protein transport"/>
    <property type="evidence" value="ECO:0007669"/>
    <property type="project" value="UniProtKB-KW"/>
</dbReference>
<dbReference type="GO" id="GO:1901673">
    <property type="term" value="P:regulation of mitotic spindle assembly"/>
    <property type="evidence" value="ECO:0000266"/>
    <property type="project" value="ComplexPortal"/>
</dbReference>
<dbReference type="GO" id="GO:0043162">
    <property type="term" value="P:ubiquitin-dependent protein catabolic process via the multivesicular body sorting pathway"/>
    <property type="evidence" value="ECO:0000266"/>
    <property type="project" value="ComplexPortal"/>
</dbReference>
<dbReference type="GO" id="GO:0051469">
    <property type="term" value="P:vesicle fusion with vacuole"/>
    <property type="evidence" value="ECO:0000303"/>
    <property type="project" value="ComplexPortal"/>
</dbReference>
<dbReference type="GO" id="GO:0046761">
    <property type="term" value="P:viral budding from plasma membrane"/>
    <property type="evidence" value="ECO:0000266"/>
    <property type="project" value="ComplexPortal"/>
</dbReference>
<dbReference type="GO" id="GO:0039702">
    <property type="term" value="P:viral budding via host ESCRT complex"/>
    <property type="evidence" value="ECO:0000266"/>
    <property type="project" value="ComplexPortal"/>
</dbReference>
<dbReference type="Gene3D" id="6.10.140.1230">
    <property type="match status" value="1"/>
</dbReference>
<dbReference type="InterPro" id="IPR005024">
    <property type="entry name" value="Snf7_fam"/>
</dbReference>
<dbReference type="PANTHER" id="PTHR10476">
    <property type="entry name" value="CHARGED MULTIVESICULAR BODY PROTEIN"/>
    <property type="match status" value="1"/>
</dbReference>
<dbReference type="Pfam" id="PF03357">
    <property type="entry name" value="Snf7"/>
    <property type="match status" value="1"/>
</dbReference>
<name>CH1B2_MOUSE</name>
<feature type="chain" id="PRO_0000211456" description="Charged multivesicular body protein 1B2">
    <location>
        <begin position="1"/>
        <end position="199"/>
    </location>
</feature>
<feature type="region of interest" description="Interaction with IST1" evidence="1">
    <location>
        <begin position="132"/>
        <end position="156"/>
    </location>
</feature>
<feature type="region of interest" description="Disordered" evidence="3">
    <location>
        <begin position="167"/>
        <end position="199"/>
    </location>
</feature>
<feature type="region of interest" description="Interaction with SPAST" evidence="1">
    <location>
        <begin position="174"/>
        <end position="199"/>
    </location>
</feature>
<feature type="region of interest" description="Interaction with VTA1" evidence="1">
    <location>
        <begin position="180"/>
        <end position="199"/>
    </location>
</feature>
<feature type="region of interest" description="Interaction with VPS4A, MITD1 and STAMBP" evidence="1">
    <location>
        <begin position="180"/>
        <end position="196"/>
    </location>
</feature>
<feature type="region of interest" description="Interaction with VPS4B" evidence="1">
    <location>
        <begin position="183"/>
        <end position="199"/>
    </location>
</feature>
<feature type="coiled-coil region" evidence="2">
    <location>
        <begin position="15"/>
        <end position="47"/>
    </location>
</feature>
<feature type="coiled-coil region" evidence="2">
    <location>
        <begin position="177"/>
        <end position="199"/>
    </location>
</feature>
<feature type="short sequence motif" description="MIT-interacting motif">
    <location>
        <begin position="186"/>
        <end position="196"/>
    </location>
</feature>
<feature type="compositionally biased region" description="Polar residues" evidence="3">
    <location>
        <begin position="170"/>
        <end position="183"/>
    </location>
</feature>
<organism>
    <name type="scientific">Mus musculus</name>
    <name type="common">Mouse</name>
    <dbReference type="NCBI Taxonomy" id="10090"/>
    <lineage>
        <taxon>Eukaryota</taxon>
        <taxon>Metazoa</taxon>
        <taxon>Chordata</taxon>
        <taxon>Craniata</taxon>
        <taxon>Vertebrata</taxon>
        <taxon>Euteleostomi</taxon>
        <taxon>Mammalia</taxon>
        <taxon>Eutheria</taxon>
        <taxon>Euarchontoglires</taxon>
        <taxon>Glires</taxon>
        <taxon>Rodentia</taxon>
        <taxon>Myomorpha</taxon>
        <taxon>Muroidea</taxon>
        <taxon>Muridae</taxon>
        <taxon>Murinae</taxon>
        <taxon>Mus</taxon>
        <taxon>Mus</taxon>
    </lineage>
</organism>
<comment type="function">
    <text evidence="1">Probable peripherally associated component of the endosomal sorting required for transport complex III (ESCRT-III) which is involved in multivesicular bodies (MVBs) formation and sorting of endosomal cargo proteins into MVBs. MVBs contain intraluminal vesicles (ILVs) that are generated by invagination and scission from the limiting membrane of the endosome and mostly are delivered to lysosomes enabling degradation of membrane proteins, such as stimulated growth factor receptors, lysosomal enzymes and lipids. The MVB pathway appears to require the sequential function of ESCRT-O, -I,-II and -III complexes. ESCRT-III proteins mostly dissociate from the invaginating membrane before the ILV is released. The ESCRT machinery also functions in topologically equivalent membrane fission events, such as the terminal stages of cytokinesis. ESCRT-III proteins are believed to mediate the necessary vesicle extrusion and/or membrane fission activities, possibly in conjunction with the AAA ATPase VPS4. Involved in cytokinesis. Involved in recruiting VPS4A and/or VPS4B and SPAST to the midbody of dividing cells (By similarity).</text>
</comment>
<comment type="subunit">
    <text evidence="1">Probable peripherally associated component of the endosomal sorting required for transport complex III (ESCRT-III). ESCRT-III components are thought to multimerize to form a flat lattice on the perimeter membrane of the endosome. Several assembly forms of ESCRT-III may exist that interact and act sequentially. Interacts with CHMP1A. Interacts with VTA1; the interaction probably involves the open conformation of CHMP1B. Interacts with CHMP2A. Interacts with VPS4A; the interaction is direct. Interacts with VPS4B; the interaction is direct. Interacts with SPAST (via MIT domain); the interaction is direct. Interacts with IST1. Interacts with MITD1. Interacts with STAMBP (By similarity).</text>
</comment>
<comment type="subcellular location">
    <subcellularLocation>
        <location evidence="1">Cytoplasm</location>
        <location evidence="1">Cytosol</location>
    </subcellularLocation>
    <subcellularLocation>
        <location evidence="1">Endosome</location>
    </subcellularLocation>
    <subcellularLocation>
        <location evidence="1">Late endosome membrane</location>
        <topology evidence="1">Peripheral membrane protein</topology>
    </subcellularLocation>
    <text evidence="1">Localizes to the midbody of dividing cells, colocalizing with CEP55 and CHMP5. Localized at the periphery of the Fleming body (By similarity).</text>
</comment>
<comment type="similarity">
    <text evidence="4">Belongs to the SNF7 family.</text>
</comment>
<reference key="1">
    <citation type="journal article" date="2005" name="Science">
        <title>The transcriptional landscape of the mammalian genome.</title>
        <authorList>
            <person name="Carninci P."/>
            <person name="Kasukawa T."/>
            <person name="Katayama S."/>
            <person name="Gough J."/>
            <person name="Frith M.C."/>
            <person name="Maeda N."/>
            <person name="Oyama R."/>
            <person name="Ravasi T."/>
            <person name="Lenhard B."/>
            <person name="Wells C."/>
            <person name="Kodzius R."/>
            <person name="Shimokawa K."/>
            <person name="Bajic V.B."/>
            <person name="Brenner S.E."/>
            <person name="Batalov S."/>
            <person name="Forrest A.R."/>
            <person name="Zavolan M."/>
            <person name="Davis M.J."/>
            <person name="Wilming L.G."/>
            <person name="Aidinis V."/>
            <person name="Allen J.E."/>
            <person name="Ambesi-Impiombato A."/>
            <person name="Apweiler R."/>
            <person name="Aturaliya R.N."/>
            <person name="Bailey T.L."/>
            <person name="Bansal M."/>
            <person name="Baxter L."/>
            <person name="Beisel K.W."/>
            <person name="Bersano T."/>
            <person name="Bono H."/>
            <person name="Chalk A.M."/>
            <person name="Chiu K.P."/>
            <person name="Choudhary V."/>
            <person name="Christoffels A."/>
            <person name="Clutterbuck D.R."/>
            <person name="Crowe M.L."/>
            <person name="Dalla E."/>
            <person name="Dalrymple B.P."/>
            <person name="de Bono B."/>
            <person name="Della Gatta G."/>
            <person name="di Bernardo D."/>
            <person name="Down T."/>
            <person name="Engstrom P."/>
            <person name="Fagiolini M."/>
            <person name="Faulkner G."/>
            <person name="Fletcher C.F."/>
            <person name="Fukushima T."/>
            <person name="Furuno M."/>
            <person name="Futaki S."/>
            <person name="Gariboldi M."/>
            <person name="Georgii-Hemming P."/>
            <person name="Gingeras T.R."/>
            <person name="Gojobori T."/>
            <person name="Green R.E."/>
            <person name="Gustincich S."/>
            <person name="Harbers M."/>
            <person name="Hayashi Y."/>
            <person name="Hensch T.K."/>
            <person name="Hirokawa N."/>
            <person name="Hill D."/>
            <person name="Huminiecki L."/>
            <person name="Iacono M."/>
            <person name="Ikeo K."/>
            <person name="Iwama A."/>
            <person name="Ishikawa T."/>
            <person name="Jakt M."/>
            <person name="Kanapin A."/>
            <person name="Katoh M."/>
            <person name="Kawasawa Y."/>
            <person name="Kelso J."/>
            <person name="Kitamura H."/>
            <person name="Kitano H."/>
            <person name="Kollias G."/>
            <person name="Krishnan S.P."/>
            <person name="Kruger A."/>
            <person name="Kummerfeld S.K."/>
            <person name="Kurochkin I.V."/>
            <person name="Lareau L.F."/>
            <person name="Lazarevic D."/>
            <person name="Lipovich L."/>
            <person name="Liu J."/>
            <person name="Liuni S."/>
            <person name="McWilliam S."/>
            <person name="Madan Babu M."/>
            <person name="Madera M."/>
            <person name="Marchionni L."/>
            <person name="Matsuda H."/>
            <person name="Matsuzawa S."/>
            <person name="Miki H."/>
            <person name="Mignone F."/>
            <person name="Miyake S."/>
            <person name="Morris K."/>
            <person name="Mottagui-Tabar S."/>
            <person name="Mulder N."/>
            <person name="Nakano N."/>
            <person name="Nakauchi H."/>
            <person name="Ng P."/>
            <person name="Nilsson R."/>
            <person name="Nishiguchi S."/>
            <person name="Nishikawa S."/>
            <person name="Nori F."/>
            <person name="Ohara O."/>
            <person name="Okazaki Y."/>
            <person name="Orlando V."/>
            <person name="Pang K.C."/>
            <person name="Pavan W.J."/>
            <person name="Pavesi G."/>
            <person name="Pesole G."/>
            <person name="Petrovsky N."/>
            <person name="Piazza S."/>
            <person name="Reed J."/>
            <person name="Reid J.F."/>
            <person name="Ring B.Z."/>
            <person name="Ringwald M."/>
            <person name="Rost B."/>
            <person name="Ruan Y."/>
            <person name="Salzberg S.L."/>
            <person name="Sandelin A."/>
            <person name="Schneider C."/>
            <person name="Schoenbach C."/>
            <person name="Sekiguchi K."/>
            <person name="Semple C.A."/>
            <person name="Seno S."/>
            <person name="Sessa L."/>
            <person name="Sheng Y."/>
            <person name="Shibata Y."/>
            <person name="Shimada H."/>
            <person name="Shimada K."/>
            <person name="Silva D."/>
            <person name="Sinclair B."/>
            <person name="Sperling S."/>
            <person name="Stupka E."/>
            <person name="Sugiura K."/>
            <person name="Sultana R."/>
            <person name="Takenaka Y."/>
            <person name="Taki K."/>
            <person name="Tammoja K."/>
            <person name="Tan S.L."/>
            <person name="Tang S."/>
            <person name="Taylor M.S."/>
            <person name="Tegner J."/>
            <person name="Teichmann S.A."/>
            <person name="Ueda H.R."/>
            <person name="van Nimwegen E."/>
            <person name="Verardo R."/>
            <person name="Wei C.L."/>
            <person name="Yagi K."/>
            <person name="Yamanishi H."/>
            <person name="Zabarovsky E."/>
            <person name="Zhu S."/>
            <person name="Zimmer A."/>
            <person name="Hide W."/>
            <person name="Bult C."/>
            <person name="Grimmond S.M."/>
            <person name="Teasdale R.D."/>
            <person name="Liu E.T."/>
            <person name="Brusic V."/>
            <person name="Quackenbush J."/>
            <person name="Wahlestedt C."/>
            <person name="Mattick J.S."/>
            <person name="Hume D.A."/>
            <person name="Kai C."/>
            <person name="Sasaki D."/>
            <person name="Tomaru Y."/>
            <person name="Fukuda S."/>
            <person name="Kanamori-Katayama M."/>
            <person name="Suzuki M."/>
            <person name="Aoki J."/>
            <person name="Arakawa T."/>
            <person name="Iida J."/>
            <person name="Imamura K."/>
            <person name="Itoh M."/>
            <person name="Kato T."/>
            <person name="Kawaji H."/>
            <person name="Kawagashira N."/>
            <person name="Kawashima T."/>
            <person name="Kojima M."/>
            <person name="Kondo S."/>
            <person name="Konno H."/>
            <person name="Nakano K."/>
            <person name="Ninomiya N."/>
            <person name="Nishio T."/>
            <person name="Okada M."/>
            <person name="Plessy C."/>
            <person name="Shibata K."/>
            <person name="Shiraki T."/>
            <person name="Suzuki S."/>
            <person name="Tagami M."/>
            <person name="Waki K."/>
            <person name="Watahiki A."/>
            <person name="Okamura-Oho Y."/>
            <person name="Suzuki H."/>
            <person name="Kawai J."/>
            <person name="Hayashizaki Y."/>
        </authorList>
    </citation>
    <scope>NUCLEOTIDE SEQUENCE [LARGE SCALE MRNA]</scope>
    <source>
        <strain>C57BL/6J</strain>
        <tissue>Head</tissue>
    </source>
</reference>
<reference key="2">
    <citation type="journal article" date="2009" name="PLoS Biol.">
        <title>Lineage-specific biology revealed by a finished genome assembly of the mouse.</title>
        <authorList>
            <person name="Church D.M."/>
            <person name="Goodstadt L."/>
            <person name="Hillier L.W."/>
            <person name="Zody M.C."/>
            <person name="Goldstein S."/>
            <person name="She X."/>
            <person name="Bult C.J."/>
            <person name="Agarwala R."/>
            <person name="Cherry J.L."/>
            <person name="DiCuccio M."/>
            <person name="Hlavina W."/>
            <person name="Kapustin Y."/>
            <person name="Meric P."/>
            <person name="Maglott D."/>
            <person name="Birtle Z."/>
            <person name="Marques A.C."/>
            <person name="Graves T."/>
            <person name="Zhou S."/>
            <person name="Teague B."/>
            <person name="Potamousis K."/>
            <person name="Churas C."/>
            <person name="Place M."/>
            <person name="Herschleb J."/>
            <person name="Runnheim R."/>
            <person name="Forrest D."/>
            <person name="Amos-Landgraf J."/>
            <person name="Schwartz D.C."/>
            <person name="Cheng Z."/>
            <person name="Lindblad-Toh K."/>
            <person name="Eichler E.E."/>
            <person name="Ponting C.P."/>
        </authorList>
    </citation>
    <scope>NUCLEOTIDE SEQUENCE [LARGE SCALE GENOMIC DNA]</scope>
    <source>
        <strain>C57BL/6J</strain>
    </source>
</reference>
<reference key="3">
    <citation type="journal article" date="2004" name="Genome Res.">
        <title>The status, quality, and expansion of the NIH full-length cDNA project: the Mammalian Gene Collection (MGC).</title>
        <authorList>
            <consortium name="The MGC Project Team"/>
        </authorList>
    </citation>
    <scope>NUCLEOTIDE SEQUENCE [LARGE SCALE MRNA]</scope>
    <source>
        <tissue>Eye</tissue>
    </source>
</reference>
<keyword id="KW-0131">Cell cycle</keyword>
<keyword id="KW-0132">Cell division</keyword>
<keyword id="KW-0175">Coiled coil</keyword>
<keyword id="KW-0963">Cytoplasm</keyword>
<keyword id="KW-0967">Endosome</keyword>
<keyword id="KW-0472">Membrane</keyword>
<keyword id="KW-0653">Protein transport</keyword>
<keyword id="KW-1185">Reference proteome</keyword>
<keyword id="KW-0813">Transport</keyword>
<gene>
    <name evidence="5" type="primary">Chmp1b2</name>
</gene>